<comment type="catalytic activity">
    <reaction evidence="1">
        <text>(R)-pantothenate + ATP = (R)-4'-phosphopantothenate + ADP + H(+)</text>
        <dbReference type="Rhea" id="RHEA:16373"/>
        <dbReference type="ChEBI" id="CHEBI:10986"/>
        <dbReference type="ChEBI" id="CHEBI:15378"/>
        <dbReference type="ChEBI" id="CHEBI:29032"/>
        <dbReference type="ChEBI" id="CHEBI:30616"/>
        <dbReference type="ChEBI" id="CHEBI:456216"/>
        <dbReference type="EC" id="2.7.1.33"/>
    </reaction>
</comment>
<comment type="pathway">
    <text evidence="1">Cofactor biosynthesis; coenzyme A biosynthesis; CoA from (R)-pantothenate: step 1/5.</text>
</comment>
<comment type="subcellular location">
    <subcellularLocation>
        <location evidence="1">Cytoplasm</location>
    </subcellularLocation>
</comment>
<comment type="similarity">
    <text evidence="1">Belongs to the prokaryotic pantothenate kinase family.</text>
</comment>
<gene>
    <name evidence="1" type="primary">coaA</name>
    <name type="ordered locus">BOV_2007</name>
</gene>
<reference key="1">
    <citation type="journal article" date="2009" name="PLoS ONE">
        <title>Genome degradation in Brucella ovis corresponds with narrowing of its host range and tissue tropism.</title>
        <authorList>
            <person name="Tsolis R.M."/>
            <person name="Seshadri R."/>
            <person name="Santos R.L."/>
            <person name="Sangari F.J."/>
            <person name="Lobo J.M."/>
            <person name="de Jong M.F."/>
            <person name="Ren Q."/>
            <person name="Myers G."/>
            <person name="Brinkac L.M."/>
            <person name="Nelson W.C."/>
            <person name="Deboy R.T."/>
            <person name="Angiuoli S."/>
            <person name="Khouri H."/>
            <person name="Dimitrov G."/>
            <person name="Robinson J.R."/>
            <person name="Mulligan S."/>
            <person name="Walker R.L."/>
            <person name="Elzer P.E."/>
            <person name="Hassan K.A."/>
            <person name="Paulsen I.T."/>
        </authorList>
    </citation>
    <scope>NUCLEOTIDE SEQUENCE [LARGE SCALE GENOMIC DNA]</scope>
    <source>
        <strain>ATCC 25840 / 63/290 / NCTC 10512</strain>
    </source>
</reference>
<evidence type="ECO:0000255" key="1">
    <source>
        <dbReference type="HAMAP-Rule" id="MF_00215"/>
    </source>
</evidence>
<dbReference type="EC" id="2.7.1.33" evidence="1"/>
<dbReference type="EMBL" id="CP000708">
    <property type="protein sequence ID" value="ABQ60149.1"/>
    <property type="molecule type" value="Genomic_DNA"/>
</dbReference>
<dbReference type="RefSeq" id="WP_004684544.1">
    <property type="nucleotide sequence ID" value="NC_009505.1"/>
</dbReference>
<dbReference type="SMR" id="A5VT45"/>
<dbReference type="GeneID" id="97534650"/>
<dbReference type="KEGG" id="bov:BOV_2007"/>
<dbReference type="HOGENOM" id="CLU_053818_1_1_5"/>
<dbReference type="PhylomeDB" id="A5VT45"/>
<dbReference type="UniPathway" id="UPA00241">
    <property type="reaction ID" value="UER00352"/>
</dbReference>
<dbReference type="Proteomes" id="UP000006383">
    <property type="component" value="Chromosome I"/>
</dbReference>
<dbReference type="GO" id="GO:0005737">
    <property type="term" value="C:cytoplasm"/>
    <property type="evidence" value="ECO:0007669"/>
    <property type="project" value="UniProtKB-SubCell"/>
</dbReference>
<dbReference type="GO" id="GO:0005524">
    <property type="term" value="F:ATP binding"/>
    <property type="evidence" value="ECO:0007669"/>
    <property type="project" value="UniProtKB-UniRule"/>
</dbReference>
<dbReference type="GO" id="GO:0004594">
    <property type="term" value="F:pantothenate kinase activity"/>
    <property type="evidence" value="ECO:0007669"/>
    <property type="project" value="UniProtKB-UniRule"/>
</dbReference>
<dbReference type="GO" id="GO:0015937">
    <property type="term" value="P:coenzyme A biosynthetic process"/>
    <property type="evidence" value="ECO:0007669"/>
    <property type="project" value="UniProtKB-UniRule"/>
</dbReference>
<dbReference type="CDD" id="cd02025">
    <property type="entry name" value="PanK"/>
    <property type="match status" value="1"/>
</dbReference>
<dbReference type="Gene3D" id="3.40.50.300">
    <property type="entry name" value="P-loop containing nucleotide triphosphate hydrolases"/>
    <property type="match status" value="1"/>
</dbReference>
<dbReference type="HAMAP" id="MF_00215">
    <property type="entry name" value="Pantothen_kinase_1"/>
    <property type="match status" value="1"/>
</dbReference>
<dbReference type="InterPro" id="IPR027417">
    <property type="entry name" value="P-loop_NTPase"/>
</dbReference>
<dbReference type="InterPro" id="IPR004566">
    <property type="entry name" value="PanK"/>
</dbReference>
<dbReference type="InterPro" id="IPR006083">
    <property type="entry name" value="PRK/URK"/>
</dbReference>
<dbReference type="NCBIfam" id="TIGR00554">
    <property type="entry name" value="panK_bact"/>
    <property type="match status" value="1"/>
</dbReference>
<dbReference type="PANTHER" id="PTHR10285">
    <property type="entry name" value="URIDINE KINASE"/>
    <property type="match status" value="1"/>
</dbReference>
<dbReference type="Pfam" id="PF00485">
    <property type="entry name" value="PRK"/>
    <property type="match status" value="1"/>
</dbReference>
<dbReference type="PIRSF" id="PIRSF000545">
    <property type="entry name" value="Pantothenate_kin"/>
    <property type="match status" value="1"/>
</dbReference>
<dbReference type="SUPFAM" id="SSF52540">
    <property type="entry name" value="P-loop containing nucleoside triphosphate hydrolases"/>
    <property type="match status" value="1"/>
</dbReference>
<keyword id="KW-0067">ATP-binding</keyword>
<keyword id="KW-0173">Coenzyme A biosynthesis</keyword>
<keyword id="KW-0963">Cytoplasm</keyword>
<keyword id="KW-0418">Kinase</keyword>
<keyword id="KW-0547">Nucleotide-binding</keyword>
<keyword id="KW-0808">Transferase</keyword>
<accession>A5VT45</accession>
<sequence>MWEKVDQLTPSRYSPYRFFSAQEWAAFRADTPLTLTYEEVKRLRSLGDPIDLDEVRRIYLSLSRLLYAHVEASQLLFRQRQQFLNMEESYKTPFIIGVAGSVAVGKSTMARILKELLARWPSSPKVDLVTTDGFLYPNAVLREQNMMERKGFPESYDIGAVLRFLSAIKAGMSRVRAPLYSHLSYDVLPGEYQIVDKPDILIFEGINVLQVRDLPEDGKMVPFVSDFFDFSIYIDADPRLIHKWYIDRFMRLRETAFRDPQSFFHRYSQLSQEAARSIAEGLWQNINLKNLNENILPTRPRADLILRKGSDHLIEEVALRKI</sequence>
<proteinExistence type="inferred from homology"/>
<protein>
    <recommendedName>
        <fullName evidence="1">Pantothenate kinase</fullName>
        <ecNumber evidence="1">2.7.1.33</ecNumber>
    </recommendedName>
    <alternativeName>
        <fullName evidence="1">Pantothenic acid kinase</fullName>
    </alternativeName>
</protein>
<organism>
    <name type="scientific">Brucella ovis (strain ATCC 25840 / 63/290 / NCTC 10512)</name>
    <dbReference type="NCBI Taxonomy" id="444178"/>
    <lineage>
        <taxon>Bacteria</taxon>
        <taxon>Pseudomonadati</taxon>
        <taxon>Pseudomonadota</taxon>
        <taxon>Alphaproteobacteria</taxon>
        <taxon>Hyphomicrobiales</taxon>
        <taxon>Brucellaceae</taxon>
        <taxon>Brucella/Ochrobactrum group</taxon>
        <taxon>Brucella</taxon>
    </lineage>
</organism>
<name>COAA_BRUO2</name>
<feature type="chain" id="PRO_1000043215" description="Pantothenate kinase">
    <location>
        <begin position="1"/>
        <end position="322"/>
    </location>
</feature>
<feature type="binding site" evidence="1">
    <location>
        <begin position="100"/>
        <end position="107"/>
    </location>
    <ligand>
        <name>ATP</name>
        <dbReference type="ChEBI" id="CHEBI:30616"/>
    </ligand>
</feature>